<proteinExistence type="inferred from homology"/>
<gene>
    <name evidence="1" type="primary">ligA</name>
    <name type="synonym">lig</name>
    <name type="ordered locus">SERP1442</name>
</gene>
<reference key="1">
    <citation type="journal article" date="2005" name="J. Bacteriol.">
        <title>Insights on evolution of virulence and resistance from the complete genome analysis of an early methicillin-resistant Staphylococcus aureus strain and a biofilm-producing methicillin-resistant Staphylococcus epidermidis strain.</title>
        <authorList>
            <person name="Gill S.R."/>
            <person name="Fouts D.E."/>
            <person name="Archer G.L."/>
            <person name="Mongodin E.F."/>
            <person name="DeBoy R.T."/>
            <person name="Ravel J."/>
            <person name="Paulsen I.T."/>
            <person name="Kolonay J.F."/>
            <person name="Brinkac L.M."/>
            <person name="Beanan M.J."/>
            <person name="Dodson R.J."/>
            <person name="Daugherty S.C."/>
            <person name="Madupu R."/>
            <person name="Angiuoli S.V."/>
            <person name="Durkin A.S."/>
            <person name="Haft D.H."/>
            <person name="Vamathevan J.J."/>
            <person name="Khouri H."/>
            <person name="Utterback T.R."/>
            <person name="Lee C."/>
            <person name="Dimitrov G."/>
            <person name="Jiang L."/>
            <person name="Qin H."/>
            <person name="Weidman J."/>
            <person name="Tran K."/>
            <person name="Kang K.H."/>
            <person name="Hance I.R."/>
            <person name="Nelson K.E."/>
            <person name="Fraser C.M."/>
        </authorList>
    </citation>
    <scope>NUCLEOTIDE SEQUENCE [LARGE SCALE GENOMIC DNA]</scope>
    <source>
        <strain>ATCC 35984 / DSM 28319 / BCRC 17069 / CCUG 31568 / BM 3577 / RP62A</strain>
    </source>
</reference>
<dbReference type="EC" id="6.5.1.2" evidence="1"/>
<dbReference type="EMBL" id="CP000029">
    <property type="protein sequence ID" value="AAW54822.1"/>
    <property type="molecule type" value="Genomic_DNA"/>
</dbReference>
<dbReference type="RefSeq" id="WP_001830451.1">
    <property type="nucleotide sequence ID" value="NC_002976.3"/>
</dbReference>
<dbReference type="SMR" id="Q5HN30"/>
<dbReference type="STRING" id="176279.SERP1442"/>
<dbReference type="GeneID" id="50018311"/>
<dbReference type="KEGG" id="ser:SERP1442"/>
<dbReference type="eggNOG" id="COG0272">
    <property type="taxonomic scope" value="Bacteria"/>
</dbReference>
<dbReference type="HOGENOM" id="CLU_007764_2_1_9"/>
<dbReference type="Proteomes" id="UP000000531">
    <property type="component" value="Chromosome"/>
</dbReference>
<dbReference type="GO" id="GO:0005829">
    <property type="term" value="C:cytosol"/>
    <property type="evidence" value="ECO:0007669"/>
    <property type="project" value="TreeGrafter"/>
</dbReference>
<dbReference type="GO" id="GO:0003677">
    <property type="term" value="F:DNA binding"/>
    <property type="evidence" value="ECO:0007669"/>
    <property type="project" value="InterPro"/>
</dbReference>
<dbReference type="GO" id="GO:0003911">
    <property type="term" value="F:DNA ligase (NAD+) activity"/>
    <property type="evidence" value="ECO:0007669"/>
    <property type="project" value="UniProtKB-UniRule"/>
</dbReference>
<dbReference type="GO" id="GO:0046872">
    <property type="term" value="F:metal ion binding"/>
    <property type="evidence" value="ECO:0007669"/>
    <property type="project" value="UniProtKB-KW"/>
</dbReference>
<dbReference type="GO" id="GO:0006281">
    <property type="term" value="P:DNA repair"/>
    <property type="evidence" value="ECO:0007669"/>
    <property type="project" value="UniProtKB-KW"/>
</dbReference>
<dbReference type="GO" id="GO:0006260">
    <property type="term" value="P:DNA replication"/>
    <property type="evidence" value="ECO:0007669"/>
    <property type="project" value="UniProtKB-KW"/>
</dbReference>
<dbReference type="CDD" id="cd17748">
    <property type="entry name" value="BRCT_DNA_ligase_like"/>
    <property type="match status" value="1"/>
</dbReference>
<dbReference type="CDD" id="cd00114">
    <property type="entry name" value="LIGANc"/>
    <property type="match status" value="1"/>
</dbReference>
<dbReference type="FunFam" id="1.10.150.20:FF:000006">
    <property type="entry name" value="DNA ligase"/>
    <property type="match status" value="1"/>
</dbReference>
<dbReference type="FunFam" id="1.10.150.20:FF:000007">
    <property type="entry name" value="DNA ligase"/>
    <property type="match status" value="1"/>
</dbReference>
<dbReference type="FunFam" id="1.10.287.610:FF:000002">
    <property type="entry name" value="DNA ligase"/>
    <property type="match status" value="1"/>
</dbReference>
<dbReference type="FunFam" id="2.40.50.140:FF:000012">
    <property type="entry name" value="DNA ligase"/>
    <property type="match status" value="1"/>
</dbReference>
<dbReference type="FunFam" id="3.30.470.30:FF:000001">
    <property type="entry name" value="DNA ligase"/>
    <property type="match status" value="1"/>
</dbReference>
<dbReference type="FunFam" id="6.20.10.30:FF:000002">
    <property type="entry name" value="DNA ligase"/>
    <property type="match status" value="1"/>
</dbReference>
<dbReference type="Gene3D" id="6.20.10.30">
    <property type="match status" value="1"/>
</dbReference>
<dbReference type="Gene3D" id="1.10.150.20">
    <property type="entry name" value="5' to 3' exonuclease, C-terminal subdomain"/>
    <property type="match status" value="2"/>
</dbReference>
<dbReference type="Gene3D" id="3.40.50.10190">
    <property type="entry name" value="BRCT domain"/>
    <property type="match status" value="1"/>
</dbReference>
<dbReference type="Gene3D" id="3.30.470.30">
    <property type="entry name" value="DNA ligase/mRNA capping enzyme"/>
    <property type="match status" value="1"/>
</dbReference>
<dbReference type="Gene3D" id="1.10.287.610">
    <property type="entry name" value="Helix hairpin bin"/>
    <property type="match status" value="1"/>
</dbReference>
<dbReference type="Gene3D" id="2.40.50.140">
    <property type="entry name" value="Nucleic acid-binding proteins"/>
    <property type="match status" value="1"/>
</dbReference>
<dbReference type="HAMAP" id="MF_01588">
    <property type="entry name" value="DNA_ligase_A"/>
    <property type="match status" value="1"/>
</dbReference>
<dbReference type="InterPro" id="IPR001357">
    <property type="entry name" value="BRCT_dom"/>
</dbReference>
<dbReference type="InterPro" id="IPR036420">
    <property type="entry name" value="BRCT_dom_sf"/>
</dbReference>
<dbReference type="InterPro" id="IPR041663">
    <property type="entry name" value="DisA/LigA_HHH"/>
</dbReference>
<dbReference type="InterPro" id="IPR001679">
    <property type="entry name" value="DNA_ligase"/>
</dbReference>
<dbReference type="InterPro" id="IPR018239">
    <property type="entry name" value="DNA_ligase_AS"/>
</dbReference>
<dbReference type="InterPro" id="IPR033136">
    <property type="entry name" value="DNA_ligase_CS"/>
</dbReference>
<dbReference type="InterPro" id="IPR013839">
    <property type="entry name" value="DNAligase_adenylation"/>
</dbReference>
<dbReference type="InterPro" id="IPR013840">
    <property type="entry name" value="DNAligase_N"/>
</dbReference>
<dbReference type="InterPro" id="IPR003583">
    <property type="entry name" value="Hlx-hairpin-Hlx_DNA-bd_motif"/>
</dbReference>
<dbReference type="InterPro" id="IPR012340">
    <property type="entry name" value="NA-bd_OB-fold"/>
</dbReference>
<dbReference type="InterPro" id="IPR004150">
    <property type="entry name" value="NAD_DNA_ligase_OB"/>
</dbReference>
<dbReference type="InterPro" id="IPR010994">
    <property type="entry name" value="RuvA_2-like"/>
</dbReference>
<dbReference type="InterPro" id="IPR004149">
    <property type="entry name" value="Znf_DNAligase_C4"/>
</dbReference>
<dbReference type="NCBIfam" id="TIGR00575">
    <property type="entry name" value="dnlj"/>
    <property type="match status" value="1"/>
</dbReference>
<dbReference type="NCBIfam" id="NF005932">
    <property type="entry name" value="PRK07956.1"/>
    <property type="match status" value="1"/>
</dbReference>
<dbReference type="PANTHER" id="PTHR23389">
    <property type="entry name" value="CHROMOSOME TRANSMISSION FIDELITY FACTOR 18"/>
    <property type="match status" value="1"/>
</dbReference>
<dbReference type="PANTHER" id="PTHR23389:SF9">
    <property type="entry name" value="DNA LIGASE"/>
    <property type="match status" value="1"/>
</dbReference>
<dbReference type="Pfam" id="PF00533">
    <property type="entry name" value="BRCT"/>
    <property type="match status" value="1"/>
</dbReference>
<dbReference type="Pfam" id="PF01653">
    <property type="entry name" value="DNA_ligase_aden"/>
    <property type="match status" value="1"/>
</dbReference>
<dbReference type="Pfam" id="PF03120">
    <property type="entry name" value="DNA_ligase_OB"/>
    <property type="match status" value="1"/>
</dbReference>
<dbReference type="Pfam" id="PF03119">
    <property type="entry name" value="DNA_ligase_ZBD"/>
    <property type="match status" value="1"/>
</dbReference>
<dbReference type="Pfam" id="PF12826">
    <property type="entry name" value="HHH_2"/>
    <property type="match status" value="1"/>
</dbReference>
<dbReference type="Pfam" id="PF14520">
    <property type="entry name" value="HHH_5"/>
    <property type="match status" value="1"/>
</dbReference>
<dbReference type="Pfam" id="PF22745">
    <property type="entry name" value="Nlig-Ia"/>
    <property type="match status" value="1"/>
</dbReference>
<dbReference type="PIRSF" id="PIRSF001604">
    <property type="entry name" value="LigA"/>
    <property type="match status" value="1"/>
</dbReference>
<dbReference type="SMART" id="SM00292">
    <property type="entry name" value="BRCT"/>
    <property type="match status" value="1"/>
</dbReference>
<dbReference type="SMART" id="SM00278">
    <property type="entry name" value="HhH1"/>
    <property type="match status" value="3"/>
</dbReference>
<dbReference type="SMART" id="SM00532">
    <property type="entry name" value="LIGANc"/>
    <property type="match status" value="1"/>
</dbReference>
<dbReference type="SUPFAM" id="SSF52113">
    <property type="entry name" value="BRCT domain"/>
    <property type="match status" value="1"/>
</dbReference>
<dbReference type="SUPFAM" id="SSF56091">
    <property type="entry name" value="DNA ligase/mRNA capping enzyme, catalytic domain"/>
    <property type="match status" value="1"/>
</dbReference>
<dbReference type="SUPFAM" id="SSF50249">
    <property type="entry name" value="Nucleic acid-binding proteins"/>
    <property type="match status" value="1"/>
</dbReference>
<dbReference type="SUPFAM" id="SSF47781">
    <property type="entry name" value="RuvA domain 2-like"/>
    <property type="match status" value="1"/>
</dbReference>
<dbReference type="PROSITE" id="PS50172">
    <property type="entry name" value="BRCT"/>
    <property type="match status" value="1"/>
</dbReference>
<dbReference type="PROSITE" id="PS01055">
    <property type="entry name" value="DNA_LIGASE_N1"/>
    <property type="match status" value="1"/>
</dbReference>
<dbReference type="PROSITE" id="PS01056">
    <property type="entry name" value="DNA_LIGASE_N2"/>
    <property type="match status" value="1"/>
</dbReference>
<feature type="chain" id="PRO_0000161764" description="DNA ligase">
    <location>
        <begin position="1"/>
        <end position="665"/>
    </location>
</feature>
<feature type="domain" description="BRCT" evidence="1">
    <location>
        <begin position="586"/>
        <end position="665"/>
    </location>
</feature>
<feature type="active site" description="N6-AMP-lysine intermediate" evidence="1">
    <location>
        <position position="112"/>
    </location>
</feature>
<feature type="binding site" evidence="1">
    <location>
        <begin position="32"/>
        <end position="36"/>
    </location>
    <ligand>
        <name>NAD(+)</name>
        <dbReference type="ChEBI" id="CHEBI:57540"/>
    </ligand>
</feature>
<feature type="binding site" evidence="1">
    <location>
        <begin position="81"/>
        <end position="82"/>
    </location>
    <ligand>
        <name>NAD(+)</name>
        <dbReference type="ChEBI" id="CHEBI:57540"/>
    </ligand>
</feature>
<feature type="binding site" evidence="1">
    <location>
        <position position="110"/>
    </location>
    <ligand>
        <name>NAD(+)</name>
        <dbReference type="ChEBI" id="CHEBI:57540"/>
    </ligand>
</feature>
<feature type="binding site" evidence="1">
    <location>
        <position position="133"/>
    </location>
    <ligand>
        <name>NAD(+)</name>
        <dbReference type="ChEBI" id="CHEBI:57540"/>
    </ligand>
</feature>
<feature type="binding site" evidence="1">
    <location>
        <position position="167"/>
    </location>
    <ligand>
        <name>NAD(+)</name>
        <dbReference type="ChEBI" id="CHEBI:57540"/>
    </ligand>
</feature>
<feature type="binding site" evidence="1">
    <location>
        <position position="283"/>
    </location>
    <ligand>
        <name>NAD(+)</name>
        <dbReference type="ChEBI" id="CHEBI:57540"/>
    </ligand>
</feature>
<feature type="binding site" evidence="1">
    <location>
        <position position="307"/>
    </location>
    <ligand>
        <name>NAD(+)</name>
        <dbReference type="ChEBI" id="CHEBI:57540"/>
    </ligand>
</feature>
<feature type="binding site" evidence="1">
    <location>
        <position position="401"/>
    </location>
    <ligand>
        <name>Zn(2+)</name>
        <dbReference type="ChEBI" id="CHEBI:29105"/>
    </ligand>
</feature>
<feature type="binding site" evidence="1">
    <location>
        <position position="404"/>
    </location>
    <ligand>
        <name>Zn(2+)</name>
        <dbReference type="ChEBI" id="CHEBI:29105"/>
    </ligand>
</feature>
<feature type="binding site" evidence="1">
    <location>
        <position position="419"/>
    </location>
    <ligand>
        <name>Zn(2+)</name>
        <dbReference type="ChEBI" id="CHEBI:29105"/>
    </ligand>
</feature>
<feature type="binding site" evidence="1">
    <location>
        <position position="424"/>
    </location>
    <ligand>
        <name>Zn(2+)</name>
        <dbReference type="ChEBI" id="CHEBI:29105"/>
    </ligand>
</feature>
<keyword id="KW-0227">DNA damage</keyword>
<keyword id="KW-0234">DNA repair</keyword>
<keyword id="KW-0235">DNA replication</keyword>
<keyword id="KW-0436">Ligase</keyword>
<keyword id="KW-0460">Magnesium</keyword>
<keyword id="KW-0464">Manganese</keyword>
<keyword id="KW-0479">Metal-binding</keyword>
<keyword id="KW-0520">NAD</keyword>
<keyword id="KW-1185">Reference proteome</keyword>
<keyword id="KW-0862">Zinc</keyword>
<comment type="function">
    <text evidence="1">DNA ligase that catalyzes the formation of phosphodiester linkages between 5'-phosphoryl and 3'-hydroxyl groups in double-stranded DNA using NAD as a coenzyme and as the energy source for the reaction. It is essential for DNA replication and repair of damaged DNA.</text>
</comment>
<comment type="catalytic activity">
    <reaction evidence="1">
        <text>NAD(+) + (deoxyribonucleotide)n-3'-hydroxyl + 5'-phospho-(deoxyribonucleotide)m = (deoxyribonucleotide)n+m + AMP + beta-nicotinamide D-nucleotide.</text>
        <dbReference type="EC" id="6.5.1.2"/>
    </reaction>
</comment>
<comment type="cofactor">
    <cofactor evidence="1">
        <name>Mg(2+)</name>
        <dbReference type="ChEBI" id="CHEBI:18420"/>
    </cofactor>
    <cofactor evidence="1">
        <name>Mn(2+)</name>
        <dbReference type="ChEBI" id="CHEBI:29035"/>
    </cofactor>
</comment>
<comment type="similarity">
    <text evidence="1">Belongs to the NAD-dependent DNA ligase family. LigA subfamily.</text>
</comment>
<evidence type="ECO:0000255" key="1">
    <source>
        <dbReference type="HAMAP-Rule" id="MF_01588"/>
    </source>
</evidence>
<name>DNLJ_STAEQ</name>
<accession>Q5HN30</accession>
<sequence length="665" mass="75078">MQGVKKRVEKLHDLLNQYSYEYYVQDNPSVPDSEYDKLLHELIEIEEKYPEFKSTDSPTVRVGGEAQSSFEKVNHDTPMLSLGNAFNEEDLRKFDQRIRDSIGKVEYMCELKIDGLAVSLKYENGRFVQGLTRGDGTTGEDITENLRTIHAIPLKIKEPLNFEVRGEAYMPRRSFIHLNNEKEQNGEQPFANPRNAAAGSLRQLDSKLAAKRKLSVFLYSVNDLTEFNATTQSEALEELDQLGFKTNQERERVSDIEGVLNYIEKWTSKRGSLSYDIDGIVIKVNDLSQQEEMGYTQKSPRWAIAYKFPAEEVITKLLDIELSIGRTGVVTPTAILEPVKVAGTTVSRASLHNEDLIHERDIRIGDSVVIKKAGDIIPEVVKSILDRRPNESEIYHMPTHCPSCGHELVRIEGEVALRCINPKCQAQLIEGLIHFVSRQAMNIDGLGTKIIHQLYENQLIKDVADIFYLKEEDLLPLERMGKKKVDNLLLAIEKSKEQSLEHLLFGLGIRHLGVKASQVLAERYETMDQLFKVTESELIEIQDIGDKLAQSVVTYLENSDIRSLIEKLSNKNVNMSYKGIKTTEIEGHPDFSGKTIVLTGKLEQMTRNEASEWLKMQGAKVTNSVTKSTDIVIAGADAGSKLAKAEKYGTEIWTEAAFIEKQNGI</sequence>
<organism>
    <name type="scientific">Staphylococcus epidermidis (strain ATCC 35984 / DSM 28319 / BCRC 17069 / CCUG 31568 / BM 3577 / RP62A)</name>
    <dbReference type="NCBI Taxonomy" id="176279"/>
    <lineage>
        <taxon>Bacteria</taxon>
        <taxon>Bacillati</taxon>
        <taxon>Bacillota</taxon>
        <taxon>Bacilli</taxon>
        <taxon>Bacillales</taxon>
        <taxon>Staphylococcaceae</taxon>
        <taxon>Staphylococcus</taxon>
    </lineage>
</organism>
<protein>
    <recommendedName>
        <fullName evidence="1">DNA ligase</fullName>
        <ecNumber evidence="1">6.5.1.2</ecNumber>
    </recommendedName>
    <alternativeName>
        <fullName evidence="1">Polydeoxyribonucleotide synthase [NAD(+)]</fullName>
    </alternativeName>
</protein>